<sequence>MYPAKYQVVPSGINYSDTPVGTFEQYQPQKAGESSEHFFSKVVVALIVILFAVGIVYLAYTLFLKDLILLLKAKKQKTTTEIGFGNTPLRRPGEGNPNGGPV</sequence>
<feature type="chain" id="PRO_0000222282" description="Movement protein">
    <location>
        <begin position="1"/>
        <end position="102"/>
    </location>
</feature>
<feature type="transmembrane region" description="Helical" evidence="2">
    <location>
        <begin position="43"/>
        <end position="63"/>
    </location>
</feature>
<feature type="region of interest" description="Disordered" evidence="3">
    <location>
        <begin position="82"/>
        <end position="102"/>
    </location>
</feature>
<organism>
    <name type="scientific">Tobacco yellow dwarf virus (strain Australia)</name>
    <name type="common">TYDV</name>
    <dbReference type="NCBI Taxonomy" id="31599"/>
    <lineage>
        <taxon>Viruses</taxon>
        <taxon>Monodnaviria</taxon>
        <taxon>Shotokuvirae</taxon>
        <taxon>Cressdnaviricota</taxon>
        <taxon>Repensiviricetes</taxon>
        <taxon>Geplafuvirales</taxon>
        <taxon>Geminiviridae</taxon>
        <taxon>Mastrevirus</taxon>
        <taxon>Tobacco yellow dwarf virus</taxon>
    </lineage>
</organism>
<reference key="1">
    <citation type="journal article" date="1992" name="Virology">
        <title>The nucleotide sequence of the infectious cloned DNA component of tobacco yellow dwarf virus reveals features of geminiviruses infecting monocotyledonous plants.</title>
        <authorList>
            <person name="Morris B.A.M."/>
            <person name="Richardson K.A."/>
            <person name="Haley A."/>
            <person name="Zhan X."/>
            <person name="Thomas J.E."/>
        </authorList>
    </citation>
    <scope>NUCLEOTIDE SEQUENCE [GENOMIC DNA]</scope>
</reference>
<name>MP_TYDVA</name>
<evidence type="ECO:0000250" key="1"/>
<evidence type="ECO:0000255" key="2"/>
<evidence type="ECO:0000256" key="3">
    <source>
        <dbReference type="SAM" id="MobiDB-lite"/>
    </source>
</evidence>
<evidence type="ECO:0000305" key="4"/>
<keyword id="KW-1043">Host membrane</keyword>
<keyword id="KW-0472">Membrane</keyword>
<keyword id="KW-0812">Transmembrane</keyword>
<keyword id="KW-1133">Transmembrane helix</keyword>
<keyword id="KW-0813">Transport</keyword>
<keyword id="KW-0916">Viral movement protein</keyword>
<organismHost>
    <name type="scientific">Datura stramonium</name>
    <name type="common">Jimsonweed</name>
    <name type="synonym">Common thornapple</name>
    <dbReference type="NCBI Taxonomy" id="4076"/>
</organismHost>
<organismHost>
    <name type="scientific">Datura stramonium var. tatula</name>
    <dbReference type="NCBI Taxonomy" id="239686"/>
</organismHost>
<organismHost>
    <name type="scientific">Nicotiana tabacum</name>
    <name type="common">Common tobacco</name>
    <dbReference type="NCBI Taxonomy" id="4097"/>
</organismHost>
<organismHost>
    <name type="scientific">Solanum lycopersicum</name>
    <name type="common">Tomato</name>
    <name type="synonym">Lycopersicon esculentum</name>
    <dbReference type="NCBI Taxonomy" id="4081"/>
</organismHost>
<protein>
    <recommendedName>
        <fullName>Movement protein</fullName>
        <shortName>MP</shortName>
    </recommendedName>
</protein>
<dbReference type="EMBL" id="M81103">
    <property type="protein sequence ID" value="AAA47947.1"/>
    <property type="molecule type" value="Genomic_DNA"/>
</dbReference>
<dbReference type="PIR" id="A42452">
    <property type="entry name" value="A42452"/>
</dbReference>
<dbReference type="SMR" id="P31619"/>
<dbReference type="KEGG" id="vg:944384"/>
<dbReference type="Proteomes" id="UP000007548">
    <property type="component" value="Segment"/>
</dbReference>
<dbReference type="GO" id="GO:0033644">
    <property type="term" value="C:host cell membrane"/>
    <property type="evidence" value="ECO:0007669"/>
    <property type="project" value="UniProtKB-SubCell"/>
</dbReference>
<dbReference type="GO" id="GO:0016020">
    <property type="term" value="C:membrane"/>
    <property type="evidence" value="ECO:0007669"/>
    <property type="project" value="UniProtKB-KW"/>
</dbReference>
<dbReference type="GO" id="GO:0046740">
    <property type="term" value="P:transport of virus in host, cell to cell"/>
    <property type="evidence" value="ECO:0007669"/>
    <property type="project" value="UniProtKB-KW"/>
</dbReference>
<dbReference type="InterPro" id="IPR002621">
    <property type="entry name" value="Gemini_mov"/>
</dbReference>
<dbReference type="Pfam" id="PF01708">
    <property type="entry name" value="Gemini_mov"/>
    <property type="match status" value="1"/>
</dbReference>
<proteinExistence type="inferred from homology"/>
<comment type="function">
    <text>Involved in the viral transport within, and between cells.</text>
</comment>
<comment type="subunit">
    <text evidence="1">Interacts with the capsid protein (CP). Part of a MP-CP-viral DNA complex (By similarity).</text>
</comment>
<comment type="subcellular location">
    <subcellularLocation>
        <location evidence="4">Host membrane</location>
        <topology evidence="4">Single-pass membrane protein</topology>
    </subcellularLocation>
</comment>
<comment type="similarity">
    <text evidence="4">Belongs to the mastrevirus movement protein family.</text>
</comment>
<accession>P31619</accession>
<gene>
    <name type="ORF">V2</name>
</gene>